<keyword id="KW-0067">ATP-binding</keyword>
<keyword id="KW-0143">Chaperone</keyword>
<keyword id="KW-0547">Nucleotide-binding</keyword>
<keyword id="KW-1185">Reference proteome</keyword>
<keyword id="KW-0677">Repeat</keyword>
<feature type="chain" id="PRO_0000422952" description="ATP-dependent Clp protease ATP-binding subunit ClpC1">
    <location>
        <begin position="1"/>
        <end position="848"/>
    </location>
</feature>
<feature type="domain" description="Clp R" evidence="4">
    <location>
        <begin position="2"/>
        <end position="144"/>
    </location>
</feature>
<feature type="domain" description="UVR" evidence="3">
    <location>
        <begin position="425"/>
        <end position="460"/>
    </location>
</feature>
<feature type="region of interest" description="Repeat 1" evidence="4">
    <location>
        <begin position="5"/>
        <end position="70"/>
    </location>
</feature>
<feature type="region of interest" description="Repeat 2" evidence="4">
    <location>
        <begin position="80"/>
        <end position="144"/>
    </location>
</feature>
<feature type="region of interest" description="Disordered" evidence="5">
    <location>
        <begin position="811"/>
        <end position="848"/>
    </location>
</feature>
<feature type="compositionally biased region" description="Low complexity" evidence="5">
    <location>
        <begin position="835"/>
        <end position="848"/>
    </location>
</feature>
<feature type="binding site" evidence="2">
    <location>
        <begin position="553"/>
        <end position="560"/>
    </location>
    <ligand>
        <name>ATP</name>
        <dbReference type="ChEBI" id="CHEBI:30616"/>
    </ligand>
</feature>
<feature type="binding site" evidence="2">
    <location>
        <begin position="617"/>
        <end position="626"/>
    </location>
    <ligand>
        <name>ATP</name>
        <dbReference type="ChEBI" id="CHEBI:30616"/>
    </ligand>
</feature>
<evidence type="ECO:0000250" key="1"/>
<evidence type="ECO:0000255" key="2"/>
<evidence type="ECO:0000255" key="3">
    <source>
        <dbReference type="PROSITE-ProRule" id="PRU00217"/>
    </source>
</evidence>
<evidence type="ECO:0000255" key="4">
    <source>
        <dbReference type="PROSITE-ProRule" id="PRU01251"/>
    </source>
</evidence>
<evidence type="ECO:0000256" key="5">
    <source>
        <dbReference type="SAM" id="MobiDB-lite"/>
    </source>
</evidence>
<evidence type="ECO:0000269" key="6">
    <source>
    </source>
</evidence>
<evidence type="ECO:0000305" key="7"/>
<reference key="1">
    <citation type="submission" date="2006-10" db="EMBL/GenBank/DDBJ databases">
        <authorList>
            <person name="Fleischmann R.D."/>
            <person name="Dodson R.J."/>
            <person name="Haft D.H."/>
            <person name="Merkel J.S."/>
            <person name="Nelson W.C."/>
            <person name="Fraser C.M."/>
        </authorList>
    </citation>
    <scope>NUCLEOTIDE SEQUENCE [LARGE SCALE GENOMIC DNA]</scope>
    <source>
        <strain>ATCC 700084 / mc(2)155</strain>
    </source>
</reference>
<reference key="2">
    <citation type="journal article" date="2007" name="Genome Biol.">
        <title>Interrupted coding sequences in Mycobacterium smegmatis: authentic mutations or sequencing errors?</title>
        <authorList>
            <person name="Deshayes C."/>
            <person name="Perrodou E."/>
            <person name="Gallien S."/>
            <person name="Euphrasie D."/>
            <person name="Schaeffer C."/>
            <person name="Van-Dorsselaer A."/>
            <person name="Poch O."/>
            <person name="Lecompte O."/>
            <person name="Reyrat J.-M."/>
        </authorList>
    </citation>
    <scope>NUCLEOTIDE SEQUENCE [LARGE SCALE GENOMIC DNA]</scope>
    <source>
        <strain>ATCC 700084 / mc(2)155</strain>
    </source>
</reference>
<reference key="3">
    <citation type="journal article" date="2009" name="Genome Res.">
        <title>Ortho-proteogenomics: multiple proteomes investigation through orthology and a new MS-based protocol.</title>
        <authorList>
            <person name="Gallien S."/>
            <person name="Perrodou E."/>
            <person name="Carapito C."/>
            <person name="Deshayes C."/>
            <person name="Reyrat J.-M."/>
            <person name="Van Dorsselaer A."/>
            <person name="Poch O."/>
            <person name="Schaeffer C."/>
            <person name="Lecompte O."/>
        </authorList>
    </citation>
    <scope>NUCLEOTIDE SEQUENCE [LARGE SCALE GENOMIC DNA]</scope>
    <source>
        <strain>ATCC 700084 / mc(2)155</strain>
    </source>
</reference>
<reference key="4">
    <citation type="journal article" date="2010" name="Mol. Microbiol.">
        <title>RseA, the SigE specific anti-sigma factor of Mycobacterium tuberculosis, is inactivated by phosphorylation-dependent ClpC1P2 proteolysis.</title>
        <authorList>
            <person name="Barik S."/>
            <person name="Sureka K."/>
            <person name="Mukherjee P."/>
            <person name="Basu J."/>
            <person name="Kundu M."/>
        </authorList>
    </citation>
    <scope>FUNCTION</scope>
    <scope>DISRUPTION PHENOTYPE</scope>
    <source>
        <strain>ATCC 700084 / mc(2)155</strain>
    </source>
</reference>
<sequence length="848" mass="93553">MFERFTDRARRVVVLAQEEARMLNHNYIGTEHILLGLIHEGEGVAAKSLESLGISLEGVRSQVEEIIGQGQQAPSGHIPFTPRAKKVLELSLREALQLGHNYIGTEHILLGLIREGEGVAAQVLVKLGAELTRVRQQVIQLLSGYQGKEAAEAGTGGRGGESGNPSTSLVLDQFGRNLTAAAMEGKLDPVIGREKEIERVMQVLSRRTKNNPVLIGEPGVGKTAVVEGLAQAIVHGEVPETLKDKQLYTLDLGSLVAGSRYRGDFEERLKKVLKEINTRGDIILFIDELHTLVGAGAAEGAIDAASILKPKLARGELQTIGATTLDEYRKYIEKDAALERRFQPVQVGEPTVEHTIEILKGLRDRYEAHHRVSITDSAMVAAATLADRYINDRFLPDKAIDLIDEAGARMRIRRMTAPPDLREFDEKIADARREKESAIDAQDFEKAAALRDKEKQLVAQRAEREKQWRSGDLDVVAEVDDEQIAEVLGNWTGIPVFKLTEEETTRLLRMEEELHKRIIGQEDAVKAVSKAIRRTRAGLKDPKRPSGSFIFAGPSGVGKTELSKALANFLFGDDDALIQIDMGEFHDRFTASRLFGAPPGYVGYEEGGQLTEKVRRKPFSVVLFDEIEKAHQEIYNSLLQVLEDGRLTDGQGRTVDFKNTVLIFTSNLGTSDISKAVGLGFSQGGSENNYERMKQKVHDELKKHFRPEFLNRIDDIIVFHQLTQDEIIQMVDLMIGRVSNQLKTKDMALELSDKAKALLAKRGFDPVLGARPLRRTIQREIEDQLSEKILFEEIGPGQLVTVDVEGWDGEGQGEDAKFTFSGGPKRAETAEPDLAGAGAAGAPTAGTE</sequence>
<gene>
    <name type="primary">clpC1</name>
    <name type="ordered locus">MSMEG_6091</name>
    <name type="ordered locus">MSMEI_5933</name>
</gene>
<organism>
    <name type="scientific">Mycolicibacterium smegmatis (strain ATCC 700084 / mc(2)155)</name>
    <name type="common">Mycobacterium smegmatis</name>
    <dbReference type="NCBI Taxonomy" id="246196"/>
    <lineage>
        <taxon>Bacteria</taxon>
        <taxon>Bacillati</taxon>
        <taxon>Actinomycetota</taxon>
        <taxon>Actinomycetes</taxon>
        <taxon>Mycobacteriales</taxon>
        <taxon>Mycobacteriaceae</taxon>
        <taxon>Mycolicibacterium</taxon>
    </lineage>
</organism>
<name>CLPC1_MYCS2</name>
<accession>A0R574</accession>
<protein>
    <recommendedName>
        <fullName>ATP-dependent Clp protease ATP-binding subunit ClpC1</fullName>
    </recommendedName>
</protein>
<dbReference type="EMBL" id="CP000480">
    <property type="protein sequence ID" value="ABK74692.1"/>
    <property type="molecule type" value="Genomic_DNA"/>
</dbReference>
<dbReference type="EMBL" id="CP001663">
    <property type="protein sequence ID" value="AFP42366.1"/>
    <property type="molecule type" value="Genomic_DNA"/>
</dbReference>
<dbReference type="RefSeq" id="WP_011731031.1">
    <property type="nucleotide sequence ID" value="NZ_SIJM01000046.1"/>
</dbReference>
<dbReference type="RefSeq" id="YP_890312.1">
    <property type="nucleotide sequence ID" value="NC_008596.1"/>
</dbReference>
<dbReference type="SMR" id="A0R574"/>
<dbReference type="STRING" id="246196.MSMEG_6091"/>
<dbReference type="PaxDb" id="246196-MSMEI_5933"/>
<dbReference type="GeneID" id="93460724"/>
<dbReference type="KEGG" id="msb:LJ00_30125"/>
<dbReference type="KEGG" id="msg:MSMEI_5933"/>
<dbReference type="KEGG" id="msm:MSMEG_6091"/>
<dbReference type="PATRIC" id="fig|246196.19.peg.5930"/>
<dbReference type="eggNOG" id="COG0542">
    <property type="taxonomic scope" value="Bacteria"/>
</dbReference>
<dbReference type="OrthoDB" id="9803641at2"/>
<dbReference type="Proteomes" id="UP000000757">
    <property type="component" value="Chromosome"/>
</dbReference>
<dbReference type="Proteomes" id="UP000006158">
    <property type="component" value="Chromosome"/>
</dbReference>
<dbReference type="GO" id="GO:0005737">
    <property type="term" value="C:cytoplasm"/>
    <property type="evidence" value="ECO:0007669"/>
    <property type="project" value="TreeGrafter"/>
</dbReference>
<dbReference type="GO" id="GO:0005524">
    <property type="term" value="F:ATP binding"/>
    <property type="evidence" value="ECO:0007669"/>
    <property type="project" value="UniProtKB-KW"/>
</dbReference>
<dbReference type="GO" id="GO:0016887">
    <property type="term" value="F:ATP hydrolysis activity"/>
    <property type="evidence" value="ECO:0007669"/>
    <property type="project" value="InterPro"/>
</dbReference>
<dbReference type="GO" id="GO:0034605">
    <property type="term" value="P:cellular response to heat"/>
    <property type="evidence" value="ECO:0007669"/>
    <property type="project" value="TreeGrafter"/>
</dbReference>
<dbReference type="CDD" id="cd00009">
    <property type="entry name" value="AAA"/>
    <property type="match status" value="1"/>
</dbReference>
<dbReference type="CDD" id="cd19499">
    <property type="entry name" value="RecA-like_ClpB_Hsp104-like"/>
    <property type="match status" value="1"/>
</dbReference>
<dbReference type="FunFam" id="1.10.8.60:FF:000017">
    <property type="entry name" value="ATP-dependent chaperone ClpB"/>
    <property type="match status" value="1"/>
</dbReference>
<dbReference type="FunFam" id="1.10.1780.10:FF:000001">
    <property type="entry name" value="ATP-dependent Clp protease ATP-binding subunit"/>
    <property type="match status" value="1"/>
</dbReference>
<dbReference type="FunFam" id="1.10.8.60:FF:000011">
    <property type="entry name" value="ATP-dependent Clp protease ATP-binding subunit"/>
    <property type="match status" value="1"/>
</dbReference>
<dbReference type="FunFam" id="3.40.50.300:FF:000025">
    <property type="entry name" value="ATP-dependent Clp protease subunit"/>
    <property type="match status" value="1"/>
</dbReference>
<dbReference type="FunFam" id="3.40.50.300:FF:000010">
    <property type="entry name" value="Chaperone clpB 1, putative"/>
    <property type="match status" value="1"/>
</dbReference>
<dbReference type="Gene3D" id="1.10.8.60">
    <property type="match status" value="2"/>
</dbReference>
<dbReference type="Gene3D" id="1.10.1780.10">
    <property type="entry name" value="Clp, N-terminal domain"/>
    <property type="match status" value="1"/>
</dbReference>
<dbReference type="Gene3D" id="3.40.50.300">
    <property type="entry name" value="P-loop containing nucleotide triphosphate hydrolases"/>
    <property type="match status" value="2"/>
</dbReference>
<dbReference type="Gene3D" id="4.10.860.10">
    <property type="entry name" value="UVR domain"/>
    <property type="match status" value="1"/>
</dbReference>
<dbReference type="InterPro" id="IPR003593">
    <property type="entry name" value="AAA+_ATPase"/>
</dbReference>
<dbReference type="InterPro" id="IPR003959">
    <property type="entry name" value="ATPase_AAA_core"/>
</dbReference>
<dbReference type="InterPro" id="IPR019489">
    <property type="entry name" value="Clp_ATPase_C"/>
</dbReference>
<dbReference type="InterPro" id="IPR036628">
    <property type="entry name" value="Clp_N_dom_sf"/>
</dbReference>
<dbReference type="InterPro" id="IPR004176">
    <property type="entry name" value="Clp_R_dom"/>
</dbReference>
<dbReference type="InterPro" id="IPR001270">
    <property type="entry name" value="ClpA/B"/>
</dbReference>
<dbReference type="InterPro" id="IPR018368">
    <property type="entry name" value="ClpA/B_CS1"/>
</dbReference>
<dbReference type="InterPro" id="IPR041546">
    <property type="entry name" value="ClpA/ClpB_AAA_lid"/>
</dbReference>
<dbReference type="InterPro" id="IPR050130">
    <property type="entry name" value="ClpA_ClpB"/>
</dbReference>
<dbReference type="InterPro" id="IPR027417">
    <property type="entry name" value="P-loop_NTPase"/>
</dbReference>
<dbReference type="InterPro" id="IPR001943">
    <property type="entry name" value="UVR_dom"/>
</dbReference>
<dbReference type="PANTHER" id="PTHR11638">
    <property type="entry name" value="ATP-DEPENDENT CLP PROTEASE"/>
    <property type="match status" value="1"/>
</dbReference>
<dbReference type="PANTHER" id="PTHR11638:SF18">
    <property type="entry name" value="HEAT SHOCK PROTEIN 104"/>
    <property type="match status" value="1"/>
</dbReference>
<dbReference type="Pfam" id="PF00004">
    <property type="entry name" value="AAA"/>
    <property type="match status" value="1"/>
</dbReference>
<dbReference type="Pfam" id="PF07724">
    <property type="entry name" value="AAA_2"/>
    <property type="match status" value="1"/>
</dbReference>
<dbReference type="Pfam" id="PF17871">
    <property type="entry name" value="AAA_lid_9"/>
    <property type="match status" value="1"/>
</dbReference>
<dbReference type="Pfam" id="PF02861">
    <property type="entry name" value="Clp_N"/>
    <property type="match status" value="2"/>
</dbReference>
<dbReference type="Pfam" id="PF10431">
    <property type="entry name" value="ClpB_D2-small"/>
    <property type="match status" value="1"/>
</dbReference>
<dbReference type="PRINTS" id="PR00300">
    <property type="entry name" value="CLPPROTEASEA"/>
</dbReference>
<dbReference type="SMART" id="SM00382">
    <property type="entry name" value="AAA"/>
    <property type="match status" value="2"/>
</dbReference>
<dbReference type="SMART" id="SM01086">
    <property type="entry name" value="ClpB_D2-small"/>
    <property type="match status" value="1"/>
</dbReference>
<dbReference type="SUPFAM" id="SSF81923">
    <property type="entry name" value="Double Clp-N motif"/>
    <property type="match status" value="1"/>
</dbReference>
<dbReference type="SUPFAM" id="SSF52540">
    <property type="entry name" value="P-loop containing nucleoside triphosphate hydrolases"/>
    <property type="match status" value="2"/>
</dbReference>
<dbReference type="PROSITE" id="PS51903">
    <property type="entry name" value="CLP_R"/>
    <property type="match status" value="1"/>
</dbReference>
<dbReference type="PROSITE" id="PS00870">
    <property type="entry name" value="CLPAB_1"/>
    <property type="match status" value="1"/>
</dbReference>
<dbReference type="PROSITE" id="PS50151">
    <property type="entry name" value="UVR"/>
    <property type="match status" value="1"/>
</dbReference>
<proteinExistence type="inferred from homology"/>
<comment type="function">
    <text evidence="1 6 7">ATP-dependent specificity component of the Clp protease. It directs the protease to specific substrates. Can perform chaperone functions in the absence of ClpP (By similarity). Degrades anti-sigma-E factor RseA in the presence of ClpP2 (Probable).</text>
</comment>
<comment type="disruption phenotype">
    <text evidence="6">Depletion experiments (using anti-sense RNA) stops degradation of anti-sigma-E factor RseA.</text>
</comment>
<comment type="similarity">
    <text evidence="7">Belongs to the ClpA/ClpB family. ClpC subfamily.</text>
</comment>